<gene>
    <name type="primary">OTOGL</name>
</gene>
<evidence type="ECO:0000250" key="1"/>
<evidence type="ECO:0000255" key="2"/>
<evidence type="ECO:0000255" key="3">
    <source>
        <dbReference type="PROSITE-ProRule" id="PRU00039"/>
    </source>
</evidence>
<evidence type="ECO:0000255" key="4">
    <source>
        <dbReference type="PROSITE-ProRule" id="PRU00580"/>
    </source>
</evidence>
<evidence type="ECO:0000305" key="5"/>
<comment type="subcellular location">
    <subcellularLocation>
        <location evidence="5">Secreted</location>
    </subcellularLocation>
</comment>
<comment type="similarity">
    <text evidence="5">Belongs to the otogelin family.</text>
</comment>
<comment type="sequence caution" evidence="5">
    <conflict type="erroneous initiation">
        <sequence resource="EMBL-CDS" id="CAH90388"/>
    </conflict>
    <text>Truncated N-terminus.</text>
</comment>
<accession>Q5RCW9</accession>
<sequence length="708" mass="80300">KIIVNRLARKVEVDSIVVPLPFSSQELSIEDSGSMYVITTPAGLIIKWSHLTGIIDIHFGFRFNLSSYTEGLCGICNEDPDDDLRMQNGTIITNMEDIGLFIESWEIEKSFEVTMRRPVRNCTEHDCSQCIDLLNRRIFIPCHDKVSPEDFCEKMWINYTYFWNYECDALSAYVALCNKFDICIQWRTPDYCSLSCPEGKEYQPCVRPCEARTCLNQWFYGHSSCLNLREDCACKDGTILHRPHSTQCIPEKECACTDSEDQPRTAGEIWNGGIDECALYKCLENGSVIPIEPDCDEEPTPVCEREAEVVMGIIDKWTCCSKEVCGCDATLCEPTIPTCTNGEKLIVGHSPLSCCPQYKCECDPLKCPSISTPECREDQFMIQVQQEEPCCFSPFCVCESCTKPVPLCHDGEFLTVDLNSTHFCCPQYYCVCEPNLCPMPLLNCAEDMNLVKENVFGQCCPTWHCEKDDVCVFQEVSVLNPGQSMIKYLEEDFCYTIECLEEKDNHTGFHTLNFTLVNCSKKCDVHQVYTPSPSDYDCCGTCKNVSCKFHMENGTSVVYVVGSTWHYNCTTYECVKTDEGAIILNYTMVCPPFNETECKMNEGIVKLYNEGCCKICKREERICQKVIIKSVIRKQDCMSQSLINVASCDGKCPSATIYNINIGSHLRFCKCCRENGVRNLSVPLYCSGNGTEIMYTLQEPIDCTCQWN</sequence>
<proteinExistence type="evidence at transcript level"/>
<reference key="1">
    <citation type="submission" date="2004-11" db="EMBL/GenBank/DDBJ databases">
        <authorList>
            <consortium name="The German cDNA consortium"/>
        </authorList>
    </citation>
    <scope>NUCLEOTIDE SEQUENCE [LARGE SCALE MRNA]</scope>
    <source>
        <tissue>Kidney</tissue>
    </source>
</reference>
<dbReference type="EMBL" id="CR858149">
    <property type="protein sequence ID" value="CAH90388.1"/>
    <property type="status" value="ALT_INIT"/>
    <property type="molecule type" value="mRNA"/>
</dbReference>
<dbReference type="RefSeq" id="NP_001125189.1">
    <property type="nucleotide sequence ID" value="NM_001131717.1"/>
</dbReference>
<dbReference type="STRING" id="9601.ENSPPYP00000005470"/>
<dbReference type="GlyCosmos" id="Q5RCW9">
    <property type="glycosylation" value="1 site, No reported glycans"/>
</dbReference>
<dbReference type="eggNOG" id="KOG1216">
    <property type="taxonomic scope" value="Eukaryota"/>
</dbReference>
<dbReference type="InParanoid" id="Q5RCW9"/>
<dbReference type="Proteomes" id="UP000001595">
    <property type="component" value="Unplaced"/>
</dbReference>
<dbReference type="GO" id="GO:0031012">
    <property type="term" value="C:extracellular matrix"/>
    <property type="evidence" value="ECO:0007669"/>
    <property type="project" value="TreeGrafter"/>
</dbReference>
<dbReference type="GO" id="GO:0005615">
    <property type="term" value="C:extracellular space"/>
    <property type="evidence" value="ECO:0007669"/>
    <property type="project" value="TreeGrafter"/>
</dbReference>
<dbReference type="CDD" id="cd19941">
    <property type="entry name" value="TIL"/>
    <property type="match status" value="1"/>
</dbReference>
<dbReference type="Gene3D" id="2.10.25.10">
    <property type="entry name" value="Laminin"/>
    <property type="match status" value="1"/>
</dbReference>
<dbReference type="InterPro" id="IPR006207">
    <property type="entry name" value="Cys_knot_C"/>
</dbReference>
<dbReference type="InterPro" id="IPR050780">
    <property type="entry name" value="Mucin_vWF_Thrombospondin_sf"/>
</dbReference>
<dbReference type="InterPro" id="IPR036084">
    <property type="entry name" value="Ser_inhib-like_sf"/>
</dbReference>
<dbReference type="InterPro" id="IPR014853">
    <property type="entry name" value="VWF/SSPO/ZAN-like_Cys-rich_dom"/>
</dbReference>
<dbReference type="InterPro" id="IPR001846">
    <property type="entry name" value="VWF_type-D"/>
</dbReference>
<dbReference type="PANTHER" id="PTHR11339">
    <property type="entry name" value="EXTRACELLULAR MATRIX GLYCOPROTEIN RELATED"/>
    <property type="match status" value="1"/>
</dbReference>
<dbReference type="PANTHER" id="PTHR11339:SF386">
    <property type="entry name" value="HEMOLECTIN, ISOFORM A"/>
    <property type="match status" value="1"/>
</dbReference>
<dbReference type="Pfam" id="PF00094">
    <property type="entry name" value="VWD"/>
    <property type="match status" value="1"/>
</dbReference>
<dbReference type="SMART" id="SM00832">
    <property type="entry name" value="C8"/>
    <property type="match status" value="1"/>
</dbReference>
<dbReference type="SMART" id="SM00041">
    <property type="entry name" value="CT"/>
    <property type="match status" value="1"/>
</dbReference>
<dbReference type="SUPFAM" id="SSF57567">
    <property type="entry name" value="Serine protease inhibitors"/>
    <property type="match status" value="1"/>
</dbReference>
<dbReference type="PROSITE" id="PS01225">
    <property type="entry name" value="CTCK_2"/>
    <property type="match status" value="1"/>
</dbReference>
<dbReference type="PROSITE" id="PS51233">
    <property type="entry name" value="VWFD"/>
    <property type="match status" value="1"/>
</dbReference>
<name>OTOGL_PONAB</name>
<organism>
    <name type="scientific">Pongo abelii</name>
    <name type="common">Sumatran orangutan</name>
    <name type="synonym">Pongo pygmaeus abelii</name>
    <dbReference type="NCBI Taxonomy" id="9601"/>
    <lineage>
        <taxon>Eukaryota</taxon>
        <taxon>Metazoa</taxon>
        <taxon>Chordata</taxon>
        <taxon>Craniata</taxon>
        <taxon>Vertebrata</taxon>
        <taxon>Euteleostomi</taxon>
        <taxon>Mammalia</taxon>
        <taxon>Eutheria</taxon>
        <taxon>Euarchontoglires</taxon>
        <taxon>Primates</taxon>
        <taxon>Haplorrhini</taxon>
        <taxon>Catarrhini</taxon>
        <taxon>Hominidae</taxon>
        <taxon>Pongo</taxon>
    </lineage>
</organism>
<protein>
    <recommendedName>
        <fullName>Otogelin-like protein</fullName>
    </recommendedName>
</protein>
<feature type="chain" id="PRO_0000358331" description="Otogelin-like protein">
    <location>
        <begin position="1" status="less than"/>
        <end position="708"/>
    </location>
</feature>
<feature type="domain" description="VWFD" evidence="4">
    <location>
        <begin position="1" status="less than"/>
        <end position="113"/>
    </location>
</feature>
<feature type="domain" description="CTCK" evidence="3">
    <location>
        <begin position="616"/>
        <end position="708"/>
    </location>
</feature>
<feature type="glycosylation site" description="N-linked (GlcNAc...) asparagine" evidence="2">
    <location>
        <position position="553"/>
    </location>
</feature>
<feature type="disulfide bond" evidence="1">
    <location>
        <begin position="616"/>
        <end position="672"/>
    </location>
</feature>
<feature type="disulfide bond" evidence="1">
    <location>
        <begin position="637"/>
        <end position="686"/>
    </location>
</feature>
<feature type="disulfide bond" evidence="1">
    <location>
        <begin position="648"/>
        <end position="703"/>
    </location>
</feature>
<feature type="disulfide bond" evidence="1">
    <location>
        <begin position="652"/>
        <end position="705"/>
    </location>
</feature>
<feature type="non-terminal residue">
    <location>
        <position position="1"/>
    </location>
</feature>
<keyword id="KW-1015">Disulfide bond</keyword>
<keyword id="KW-0325">Glycoprotein</keyword>
<keyword id="KW-1185">Reference proteome</keyword>
<keyword id="KW-0964">Secreted</keyword>